<evidence type="ECO:0000255" key="1">
    <source>
        <dbReference type="HAMAP-Rule" id="MF_00501"/>
    </source>
</evidence>
<evidence type="ECO:0000305" key="2"/>
<reference key="1">
    <citation type="journal article" date="2006" name="PLoS Genet.">
        <title>Who ate whom? Adaptive Helicobacter genomic changes that accompanied a host jump from early humans to large felines.</title>
        <authorList>
            <person name="Eppinger M."/>
            <person name="Baar C."/>
            <person name="Linz B."/>
            <person name="Raddatz G."/>
            <person name="Lanz C."/>
            <person name="Keller H."/>
            <person name="Morelli G."/>
            <person name="Gressmann H."/>
            <person name="Achtman M."/>
            <person name="Schuster S.C."/>
        </authorList>
    </citation>
    <scope>NUCLEOTIDE SEQUENCE [LARGE SCALE GENOMIC DNA]</scope>
    <source>
        <strain>Sheeba</strain>
    </source>
</reference>
<proteinExistence type="inferred from homology"/>
<comment type="function">
    <text evidence="1">Binds the 23S rRNA.</text>
</comment>
<comment type="subunit">
    <text evidence="1">Part of the 50S ribosomal subunit.</text>
</comment>
<comment type="similarity">
    <text evidence="1">Belongs to the bacterial ribosomal protein bL31 family. Type A subfamily.</text>
</comment>
<dbReference type="EMBL" id="AM260522">
    <property type="protein sequence ID" value="CAJ99656.1"/>
    <property type="molecule type" value="Genomic_DNA"/>
</dbReference>
<dbReference type="RefSeq" id="WP_000715278.1">
    <property type="nucleotide sequence ID" value="NC_008229.1"/>
</dbReference>
<dbReference type="SMR" id="Q17XH0"/>
<dbReference type="STRING" id="382638.Hac_0874"/>
<dbReference type="GeneID" id="93236900"/>
<dbReference type="KEGG" id="hac:Hac_0874"/>
<dbReference type="eggNOG" id="COG0254">
    <property type="taxonomic scope" value="Bacteria"/>
</dbReference>
<dbReference type="HOGENOM" id="CLU_114306_4_0_7"/>
<dbReference type="OrthoDB" id="9803251at2"/>
<dbReference type="BioCyc" id="HACI382638:HAC_RS03765-MONOMER"/>
<dbReference type="Proteomes" id="UP000000775">
    <property type="component" value="Chromosome"/>
</dbReference>
<dbReference type="GO" id="GO:1990904">
    <property type="term" value="C:ribonucleoprotein complex"/>
    <property type="evidence" value="ECO:0007669"/>
    <property type="project" value="UniProtKB-KW"/>
</dbReference>
<dbReference type="GO" id="GO:0005840">
    <property type="term" value="C:ribosome"/>
    <property type="evidence" value="ECO:0007669"/>
    <property type="project" value="UniProtKB-KW"/>
</dbReference>
<dbReference type="GO" id="GO:0019843">
    <property type="term" value="F:rRNA binding"/>
    <property type="evidence" value="ECO:0007669"/>
    <property type="project" value="UniProtKB-KW"/>
</dbReference>
<dbReference type="GO" id="GO:0003735">
    <property type="term" value="F:structural constituent of ribosome"/>
    <property type="evidence" value="ECO:0007669"/>
    <property type="project" value="InterPro"/>
</dbReference>
<dbReference type="GO" id="GO:0006412">
    <property type="term" value="P:translation"/>
    <property type="evidence" value="ECO:0007669"/>
    <property type="project" value="UniProtKB-UniRule"/>
</dbReference>
<dbReference type="Gene3D" id="4.10.830.30">
    <property type="entry name" value="Ribosomal protein L31"/>
    <property type="match status" value="1"/>
</dbReference>
<dbReference type="HAMAP" id="MF_00501">
    <property type="entry name" value="Ribosomal_bL31_1"/>
    <property type="match status" value="1"/>
</dbReference>
<dbReference type="InterPro" id="IPR034704">
    <property type="entry name" value="Ribosomal_bL28/bL31-like_sf"/>
</dbReference>
<dbReference type="InterPro" id="IPR002150">
    <property type="entry name" value="Ribosomal_bL31"/>
</dbReference>
<dbReference type="InterPro" id="IPR027491">
    <property type="entry name" value="Ribosomal_bL31_A"/>
</dbReference>
<dbReference type="InterPro" id="IPR042105">
    <property type="entry name" value="Ribosomal_bL31_sf"/>
</dbReference>
<dbReference type="NCBIfam" id="TIGR00105">
    <property type="entry name" value="L31"/>
    <property type="match status" value="1"/>
</dbReference>
<dbReference type="NCBIfam" id="NF000612">
    <property type="entry name" value="PRK00019.1"/>
    <property type="match status" value="1"/>
</dbReference>
<dbReference type="NCBIfam" id="NF001809">
    <property type="entry name" value="PRK00528.1"/>
    <property type="match status" value="1"/>
</dbReference>
<dbReference type="PANTHER" id="PTHR33280">
    <property type="entry name" value="50S RIBOSOMAL PROTEIN L31, CHLOROPLASTIC"/>
    <property type="match status" value="1"/>
</dbReference>
<dbReference type="PANTHER" id="PTHR33280:SF6">
    <property type="entry name" value="LARGE RIBOSOMAL SUBUNIT PROTEIN BL31A"/>
    <property type="match status" value="1"/>
</dbReference>
<dbReference type="Pfam" id="PF01197">
    <property type="entry name" value="Ribosomal_L31"/>
    <property type="match status" value="1"/>
</dbReference>
<dbReference type="PRINTS" id="PR01249">
    <property type="entry name" value="RIBOSOMALL31"/>
</dbReference>
<dbReference type="SUPFAM" id="SSF143800">
    <property type="entry name" value="L28p-like"/>
    <property type="match status" value="1"/>
</dbReference>
<dbReference type="PROSITE" id="PS01143">
    <property type="entry name" value="RIBOSOMAL_L31"/>
    <property type="match status" value="1"/>
</dbReference>
<feature type="chain" id="PRO_1000126642" description="Large ribosomal subunit protein bL31">
    <location>
        <begin position="1"/>
        <end position="67"/>
    </location>
</feature>
<sequence length="67" mass="7652">MKKGIHPEYIPCKVTCVTSGKEIEVLSTKPEMRIDISSFCHPFYTGSDKIADTAGRVEKFKQRYNLK</sequence>
<protein>
    <recommendedName>
        <fullName evidence="1">Large ribosomal subunit protein bL31</fullName>
    </recommendedName>
    <alternativeName>
        <fullName evidence="2">50S ribosomal protein L31</fullName>
    </alternativeName>
</protein>
<organism>
    <name type="scientific">Helicobacter acinonychis (strain Sheeba)</name>
    <dbReference type="NCBI Taxonomy" id="382638"/>
    <lineage>
        <taxon>Bacteria</taxon>
        <taxon>Pseudomonadati</taxon>
        <taxon>Campylobacterota</taxon>
        <taxon>Epsilonproteobacteria</taxon>
        <taxon>Campylobacterales</taxon>
        <taxon>Helicobacteraceae</taxon>
        <taxon>Helicobacter</taxon>
    </lineage>
</organism>
<name>RL31_HELAH</name>
<gene>
    <name evidence="1" type="primary">rpmE</name>
    <name type="ordered locus">Hac_0874</name>
</gene>
<keyword id="KW-0687">Ribonucleoprotein</keyword>
<keyword id="KW-0689">Ribosomal protein</keyword>
<keyword id="KW-0694">RNA-binding</keyword>
<keyword id="KW-0699">rRNA-binding</keyword>
<accession>Q17XH0</accession>